<protein>
    <recommendedName>
        <fullName evidence="1">Protoheme IX farnesyltransferase</fullName>
        <ecNumber evidence="1">2.5.1.141</ecNumber>
    </recommendedName>
    <alternativeName>
        <fullName evidence="1">Heme B farnesyltransferase</fullName>
    </alternativeName>
    <alternativeName>
        <fullName evidence="1">Heme O synthase</fullName>
    </alternativeName>
</protein>
<accession>Q6NBJ5</accession>
<organism>
    <name type="scientific">Rhodopseudomonas palustris (strain ATCC BAA-98 / CGA009)</name>
    <dbReference type="NCBI Taxonomy" id="258594"/>
    <lineage>
        <taxon>Bacteria</taxon>
        <taxon>Pseudomonadati</taxon>
        <taxon>Pseudomonadota</taxon>
        <taxon>Alphaproteobacteria</taxon>
        <taxon>Hyphomicrobiales</taxon>
        <taxon>Nitrobacteraceae</taxon>
        <taxon>Rhodopseudomonas</taxon>
    </lineage>
</organism>
<proteinExistence type="inferred from homology"/>
<comment type="function">
    <text evidence="1">Converts heme B (protoheme IX) to heme O by substitution of the vinyl group on carbon 2 of heme B porphyrin ring with a hydroxyethyl farnesyl side group.</text>
</comment>
<comment type="catalytic activity">
    <reaction evidence="1">
        <text>heme b + (2E,6E)-farnesyl diphosphate + H2O = Fe(II)-heme o + diphosphate</text>
        <dbReference type="Rhea" id="RHEA:28070"/>
        <dbReference type="ChEBI" id="CHEBI:15377"/>
        <dbReference type="ChEBI" id="CHEBI:33019"/>
        <dbReference type="ChEBI" id="CHEBI:60344"/>
        <dbReference type="ChEBI" id="CHEBI:60530"/>
        <dbReference type="ChEBI" id="CHEBI:175763"/>
        <dbReference type="EC" id="2.5.1.141"/>
    </reaction>
</comment>
<comment type="pathway">
    <text evidence="1">Porphyrin-containing compound metabolism; heme O biosynthesis; heme O from protoheme: step 1/1.</text>
</comment>
<comment type="subcellular location">
    <subcellularLocation>
        <location evidence="1">Cell inner membrane</location>
        <topology evidence="1">Multi-pass membrane protein</topology>
    </subcellularLocation>
</comment>
<comment type="miscellaneous">
    <text evidence="1">Carbon 2 of the heme B porphyrin ring is defined according to the Fischer nomenclature.</text>
</comment>
<comment type="similarity">
    <text evidence="1">Belongs to the UbiA prenyltransferase family. Protoheme IX farnesyltransferase subfamily.</text>
</comment>
<comment type="sequence caution" evidence="2">
    <conflict type="erroneous initiation">
        <sequence resource="EMBL-CDS" id="CAE26277"/>
    </conflict>
</comment>
<keyword id="KW-0997">Cell inner membrane</keyword>
<keyword id="KW-1003">Cell membrane</keyword>
<keyword id="KW-0350">Heme biosynthesis</keyword>
<keyword id="KW-0472">Membrane</keyword>
<keyword id="KW-0808">Transferase</keyword>
<keyword id="KW-0812">Transmembrane</keyword>
<keyword id="KW-1133">Transmembrane helix</keyword>
<sequence>MSVIDVNPIPLAPRISEAGVADYIALLKPRVMSLVVFTALVGLLMAPGSFHPVLAITAIICIAVGGGAAGALNMWYEDDIDAKMTRTANRPIPRGRVTRPEALTFGMTLAFFSVVTLGILVNWIAAGLLAFTIFFYVVIYTMWLKRWTAQNIVIGGAAGALPPVVAWASVTGSLAVEPILLFLIIFFWTPPHFWALALFRNDDYARAGVPMLPVVAGPDHTRLQILLYTVALVAVAAAPWPLGYFDVIYGVASLALGGWMLVLAVRVYRHRSGSAALRATRNLFKFSILYLFALFAILLVEVVAAAVLRLIG</sequence>
<gene>
    <name evidence="1" type="primary">ctaB</name>
    <name type="synonym">coxE</name>
    <name type="ordered locus">RPA0833</name>
</gene>
<dbReference type="EC" id="2.5.1.141" evidence="1"/>
<dbReference type="EMBL" id="BX572595">
    <property type="protein sequence ID" value="CAE26277.1"/>
    <property type="status" value="ALT_INIT"/>
    <property type="molecule type" value="Genomic_DNA"/>
</dbReference>
<dbReference type="RefSeq" id="WP_042440794.1">
    <property type="nucleotide sequence ID" value="NZ_CP116810.1"/>
</dbReference>
<dbReference type="SMR" id="Q6NBJ5"/>
<dbReference type="STRING" id="258594.RPA0833"/>
<dbReference type="GeneID" id="66891850"/>
<dbReference type="eggNOG" id="COG0109">
    <property type="taxonomic scope" value="Bacteria"/>
</dbReference>
<dbReference type="HOGENOM" id="CLU_029631_0_2_5"/>
<dbReference type="UniPathway" id="UPA00834">
    <property type="reaction ID" value="UER00712"/>
</dbReference>
<dbReference type="GO" id="GO:0005886">
    <property type="term" value="C:plasma membrane"/>
    <property type="evidence" value="ECO:0007669"/>
    <property type="project" value="UniProtKB-SubCell"/>
</dbReference>
<dbReference type="GO" id="GO:0008495">
    <property type="term" value="F:protoheme IX farnesyltransferase activity"/>
    <property type="evidence" value="ECO:0007669"/>
    <property type="project" value="UniProtKB-UniRule"/>
</dbReference>
<dbReference type="GO" id="GO:0048034">
    <property type="term" value="P:heme O biosynthetic process"/>
    <property type="evidence" value="ECO:0007669"/>
    <property type="project" value="UniProtKB-UniRule"/>
</dbReference>
<dbReference type="CDD" id="cd13957">
    <property type="entry name" value="PT_UbiA_Cox10"/>
    <property type="match status" value="1"/>
</dbReference>
<dbReference type="Gene3D" id="1.10.357.140">
    <property type="entry name" value="UbiA prenyltransferase"/>
    <property type="match status" value="1"/>
</dbReference>
<dbReference type="HAMAP" id="MF_00154">
    <property type="entry name" value="CyoE_CtaB"/>
    <property type="match status" value="1"/>
</dbReference>
<dbReference type="InterPro" id="IPR006369">
    <property type="entry name" value="Protohaem_IX_farnesylTrfase"/>
</dbReference>
<dbReference type="InterPro" id="IPR000537">
    <property type="entry name" value="UbiA_prenyltransferase"/>
</dbReference>
<dbReference type="InterPro" id="IPR030470">
    <property type="entry name" value="UbiA_prenylTrfase_CS"/>
</dbReference>
<dbReference type="InterPro" id="IPR044878">
    <property type="entry name" value="UbiA_sf"/>
</dbReference>
<dbReference type="NCBIfam" id="TIGR01473">
    <property type="entry name" value="cyoE_ctaB"/>
    <property type="match status" value="1"/>
</dbReference>
<dbReference type="NCBIfam" id="NF003349">
    <property type="entry name" value="PRK04375.1-2"/>
    <property type="match status" value="1"/>
</dbReference>
<dbReference type="PANTHER" id="PTHR43448:SF7">
    <property type="entry name" value="4-HYDROXYBENZOATE SOLANESYLTRANSFERASE"/>
    <property type="match status" value="1"/>
</dbReference>
<dbReference type="PANTHER" id="PTHR43448">
    <property type="entry name" value="PROTOHEME IX FARNESYLTRANSFERASE, MITOCHONDRIAL"/>
    <property type="match status" value="1"/>
</dbReference>
<dbReference type="Pfam" id="PF01040">
    <property type="entry name" value="UbiA"/>
    <property type="match status" value="1"/>
</dbReference>
<dbReference type="PROSITE" id="PS00943">
    <property type="entry name" value="UBIA"/>
    <property type="match status" value="1"/>
</dbReference>
<evidence type="ECO:0000255" key="1">
    <source>
        <dbReference type="HAMAP-Rule" id="MF_00154"/>
    </source>
</evidence>
<evidence type="ECO:0000305" key="2"/>
<feature type="chain" id="PRO_0000327139" description="Protoheme IX farnesyltransferase">
    <location>
        <begin position="1"/>
        <end position="312"/>
    </location>
</feature>
<feature type="transmembrane region" description="Helical" evidence="1">
    <location>
        <begin position="31"/>
        <end position="51"/>
    </location>
</feature>
<feature type="transmembrane region" description="Helical" evidence="1">
    <location>
        <begin position="52"/>
        <end position="72"/>
    </location>
</feature>
<feature type="transmembrane region" description="Helical" evidence="1">
    <location>
        <begin position="119"/>
        <end position="139"/>
    </location>
</feature>
<feature type="transmembrane region" description="Helical" evidence="1">
    <location>
        <begin position="152"/>
        <end position="172"/>
    </location>
</feature>
<feature type="transmembrane region" description="Helical" evidence="1">
    <location>
        <begin position="179"/>
        <end position="199"/>
    </location>
</feature>
<feature type="transmembrane region" description="Helical" evidence="1">
    <location>
        <begin position="225"/>
        <end position="245"/>
    </location>
</feature>
<feature type="transmembrane region" description="Helical" evidence="1">
    <location>
        <begin position="247"/>
        <end position="267"/>
    </location>
</feature>
<feature type="transmembrane region" description="Helical" evidence="1">
    <location>
        <begin position="288"/>
        <end position="308"/>
    </location>
</feature>
<name>COXX_RHOPA</name>
<reference key="1">
    <citation type="journal article" date="2004" name="Nat. Biotechnol.">
        <title>Complete genome sequence of the metabolically versatile photosynthetic bacterium Rhodopseudomonas palustris.</title>
        <authorList>
            <person name="Larimer F.W."/>
            <person name="Chain P."/>
            <person name="Hauser L."/>
            <person name="Lamerdin J.E."/>
            <person name="Malfatti S."/>
            <person name="Do L."/>
            <person name="Land M.L."/>
            <person name="Pelletier D.A."/>
            <person name="Beatty J.T."/>
            <person name="Lang A.S."/>
            <person name="Tabita F.R."/>
            <person name="Gibson J.L."/>
            <person name="Hanson T.E."/>
            <person name="Bobst C."/>
            <person name="Torres y Torres J.L."/>
            <person name="Peres C."/>
            <person name="Harrison F.H."/>
            <person name="Gibson J."/>
            <person name="Harwood C.S."/>
        </authorList>
    </citation>
    <scope>NUCLEOTIDE SEQUENCE [LARGE SCALE GENOMIC DNA]</scope>
    <source>
        <strain>ATCC BAA-98 / CGA009</strain>
    </source>
</reference>